<accession>Q2A1J6</accession>
<proteinExistence type="inferred from homology"/>
<evidence type="ECO:0000255" key="1">
    <source>
        <dbReference type="HAMAP-Rule" id="MF_01554"/>
    </source>
</evidence>
<name>GLMM_FRATH</name>
<comment type="function">
    <text evidence="1">Catalyzes the conversion of glucosamine-6-phosphate to glucosamine-1-phosphate.</text>
</comment>
<comment type="catalytic activity">
    <reaction evidence="1">
        <text>alpha-D-glucosamine 1-phosphate = D-glucosamine 6-phosphate</text>
        <dbReference type="Rhea" id="RHEA:23424"/>
        <dbReference type="ChEBI" id="CHEBI:58516"/>
        <dbReference type="ChEBI" id="CHEBI:58725"/>
        <dbReference type="EC" id="5.4.2.10"/>
    </reaction>
</comment>
<comment type="cofactor">
    <cofactor evidence="1">
        <name>Mg(2+)</name>
        <dbReference type="ChEBI" id="CHEBI:18420"/>
    </cofactor>
    <text evidence="1">Binds 1 Mg(2+) ion per subunit.</text>
</comment>
<comment type="PTM">
    <text evidence="1">Activated by phosphorylation.</text>
</comment>
<comment type="similarity">
    <text evidence="1">Belongs to the phosphohexose mutase family.</text>
</comment>
<keyword id="KW-0413">Isomerase</keyword>
<keyword id="KW-0460">Magnesium</keyword>
<keyword id="KW-0479">Metal-binding</keyword>
<keyword id="KW-0597">Phosphoprotein</keyword>
<keyword id="KW-1185">Reference proteome</keyword>
<reference key="1">
    <citation type="submission" date="2006-03" db="EMBL/GenBank/DDBJ databases">
        <title>Complete genome sequence of Francisella tularensis LVS (Live Vaccine Strain).</title>
        <authorList>
            <person name="Chain P."/>
            <person name="Larimer F."/>
            <person name="Land M."/>
            <person name="Stilwagen S."/>
            <person name="Larsson P."/>
            <person name="Bearden S."/>
            <person name="Chu M."/>
            <person name="Oyston P."/>
            <person name="Forsman M."/>
            <person name="Andersson S."/>
            <person name="Lindler L."/>
            <person name="Titball R."/>
            <person name="Garcia E."/>
        </authorList>
    </citation>
    <scope>NUCLEOTIDE SEQUENCE [LARGE SCALE GENOMIC DNA]</scope>
    <source>
        <strain>LVS</strain>
    </source>
</reference>
<feature type="chain" id="PRO_0000301313" description="Phosphoglucosamine mutase">
    <location>
        <begin position="1"/>
        <end position="443"/>
    </location>
</feature>
<feature type="active site" description="Phosphoserine intermediate" evidence="1">
    <location>
        <position position="101"/>
    </location>
</feature>
<feature type="binding site" description="via phosphate group" evidence="1">
    <location>
        <position position="101"/>
    </location>
    <ligand>
        <name>Mg(2+)</name>
        <dbReference type="ChEBI" id="CHEBI:18420"/>
    </ligand>
</feature>
<feature type="binding site" evidence="1">
    <location>
        <position position="239"/>
    </location>
    <ligand>
        <name>Mg(2+)</name>
        <dbReference type="ChEBI" id="CHEBI:18420"/>
    </ligand>
</feature>
<feature type="binding site" evidence="1">
    <location>
        <position position="241"/>
    </location>
    <ligand>
        <name>Mg(2+)</name>
        <dbReference type="ChEBI" id="CHEBI:18420"/>
    </ligand>
</feature>
<feature type="binding site" evidence="1">
    <location>
        <position position="243"/>
    </location>
    <ligand>
        <name>Mg(2+)</name>
        <dbReference type="ChEBI" id="CHEBI:18420"/>
    </ligand>
</feature>
<feature type="modified residue" description="Phosphoserine" evidence="1">
    <location>
        <position position="101"/>
    </location>
</feature>
<protein>
    <recommendedName>
        <fullName evidence="1">Phosphoglucosamine mutase</fullName>
        <ecNumber evidence="1">5.4.2.10</ecNumber>
    </recommendedName>
</protein>
<gene>
    <name evidence="1" type="primary">glmM</name>
    <name type="ordered locus">FTL_1781</name>
</gene>
<organism>
    <name type="scientific">Francisella tularensis subsp. holarctica (strain LVS)</name>
    <dbReference type="NCBI Taxonomy" id="376619"/>
    <lineage>
        <taxon>Bacteria</taxon>
        <taxon>Pseudomonadati</taxon>
        <taxon>Pseudomonadota</taxon>
        <taxon>Gammaproteobacteria</taxon>
        <taxon>Thiotrichales</taxon>
        <taxon>Francisellaceae</taxon>
        <taxon>Francisella</taxon>
    </lineage>
</organism>
<sequence>MAKYFGTDGIRGEVANSTITVEFTQKLGNAVGSLINQKNYPKFVIVGQDTRSSGGFLKFALVSGLNAAGIDVLDLGVVPTPVVAFMTVKHRAAAGFVITASHNKFTDNGIKLFSSNGFKLDDALEEEVEDMIDGDFIYQPQFKFGSYKILANAIDEYIESIHSRFAKFVNYKGKVVVDCAHGAASHNFEALLDKFGINYVSIASNPDGLNINVGCGATCVSNIKKAVKEQKADLGISLDGDADRIIIVDENGQEIDGDGILNILAQYSDICGGTNGIVGTQMTNMSYENHYRANKIPFIRSKVGDRYVLEDLVKYGYKIGGESSGHVINLNFGTTGDGLFTAIQLLAIFSQAYKPVSEFKLQGELMQQTLINVPLTKKVAREDLQKVASDVNDVEKRLGNRGRVLLRPSGTEPVLRVMVEADDKSLATNEAEYLVEKVKQKLV</sequence>
<dbReference type="EC" id="5.4.2.10" evidence="1"/>
<dbReference type="EMBL" id="AM233362">
    <property type="protein sequence ID" value="CAJ80220.1"/>
    <property type="molecule type" value="Genomic_DNA"/>
</dbReference>
<dbReference type="RefSeq" id="WP_003017310.1">
    <property type="nucleotide sequence ID" value="NZ_CP009694.1"/>
</dbReference>
<dbReference type="SMR" id="Q2A1J6"/>
<dbReference type="KEGG" id="ftl:FTL_1781"/>
<dbReference type="Proteomes" id="UP000001944">
    <property type="component" value="Chromosome"/>
</dbReference>
<dbReference type="GO" id="GO:0005829">
    <property type="term" value="C:cytosol"/>
    <property type="evidence" value="ECO:0007669"/>
    <property type="project" value="TreeGrafter"/>
</dbReference>
<dbReference type="GO" id="GO:0000287">
    <property type="term" value="F:magnesium ion binding"/>
    <property type="evidence" value="ECO:0007669"/>
    <property type="project" value="UniProtKB-UniRule"/>
</dbReference>
<dbReference type="GO" id="GO:0008966">
    <property type="term" value="F:phosphoglucosamine mutase activity"/>
    <property type="evidence" value="ECO:0007669"/>
    <property type="project" value="UniProtKB-UniRule"/>
</dbReference>
<dbReference type="GO" id="GO:0004615">
    <property type="term" value="F:phosphomannomutase activity"/>
    <property type="evidence" value="ECO:0007669"/>
    <property type="project" value="TreeGrafter"/>
</dbReference>
<dbReference type="GO" id="GO:0005975">
    <property type="term" value="P:carbohydrate metabolic process"/>
    <property type="evidence" value="ECO:0007669"/>
    <property type="project" value="InterPro"/>
</dbReference>
<dbReference type="GO" id="GO:0009252">
    <property type="term" value="P:peptidoglycan biosynthetic process"/>
    <property type="evidence" value="ECO:0007669"/>
    <property type="project" value="TreeGrafter"/>
</dbReference>
<dbReference type="GO" id="GO:0006048">
    <property type="term" value="P:UDP-N-acetylglucosamine biosynthetic process"/>
    <property type="evidence" value="ECO:0007669"/>
    <property type="project" value="TreeGrafter"/>
</dbReference>
<dbReference type="CDD" id="cd05802">
    <property type="entry name" value="GlmM"/>
    <property type="match status" value="1"/>
</dbReference>
<dbReference type="FunFam" id="3.30.310.50:FF:000001">
    <property type="entry name" value="Phosphoglucosamine mutase"/>
    <property type="match status" value="1"/>
</dbReference>
<dbReference type="FunFam" id="3.40.120.10:FF:000001">
    <property type="entry name" value="Phosphoglucosamine mutase"/>
    <property type="match status" value="1"/>
</dbReference>
<dbReference type="FunFam" id="3.40.120.10:FF:000003">
    <property type="entry name" value="Phosphoglucosamine mutase"/>
    <property type="match status" value="1"/>
</dbReference>
<dbReference type="Gene3D" id="3.40.120.10">
    <property type="entry name" value="Alpha-D-Glucose-1,6-Bisphosphate, subunit A, domain 3"/>
    <property type="match status" value="3"/>
</dbReference>
<dbReference type="Gene3D" id="3.30.310.50">
    <property type="entry name" value="Alpha-D-phosphohexomutase, C-terminal domain"/>
    <property type="match status" value="1"/>
</dbReference>
<dbReference type="HAMAP" id="MF_01554_B">
    <property type="entry name" value="GlmM_B"/>
    <property type="match status" value="1"/>
</dbReference>
<dbReference type="InterPro" id="IPR005844">
    <property type="entry name" value="A-D-PHexomutase_a/b/a-I"/>
</dbReference>
<dbReference type="InterPro" id="IPR016055">
    <property type="entry name" value="A-D-PHexomutase_a/b/a-I/II/III"/>
</dbReference>
<dbReference type="InterPro" id="IPR005845">
    <property type="entry name" value="A-D-PHexomutase_a/b/a-II"/>
</dbReference>
<dbReference type="InterPro" id="IPR005846">
    <property type="entry name" value="A-D-PHexomutase_a/b/a-III"/>
</dbReference>
<dbReference type="InterPro" id="IPR005843">
    <property type="entry name" value="A-D-PHexomutase_C"/>
</dbReference>
<dbReference type="InterPro" id="IPR036900">
    <property type="entry name" value="A-D-PHexomutase_C_sf"/>
</dbReference>
<dbReference type="InterPro" id="IPR005841">
    <property type="entry name" value="Alpha-D-phosphohexomutase_SF"/>
</dbReference>
<dbReference type="InterPro" id="IPR006352">
    <property type="entry name" value="GlmM_bact"/>
</dbReference>
<dbReference type="InterPro" id="IPR050060">
    <property type="entry name" value="Phosphoglucosamine_mutase"/>
</dbReference>
<dbReference type="NCBIfam" id="TIGR01455">
    <property type="entry name" value="glmM"/>
    <property type="match status" value="1"/>
</dbReference>
<dbReference type="NCBIfam" id="NF008139">
    <property type="entry name" value="PRK10887.1"/>
    <property type="match status" value="1"/>
</dbReference>
<dbReference type="PANTHER" id="PTHR42946:SF1">
    <property type="entry name" value="PHOSPHOGLUCOMUTASE (ALPHA-D-GLUCOSE-1,6-BISPHOSPHATE-DEPENDENT)"/>
    <property type="match status" value="1"/>
</dbReference>
<dbReference type="PANTHER" id="PTHR42946">
    <property type="entry name" value="PHOSPHOHEXOSE MUTASE"/>
    <property type="match status" value="1"/>
</dbReference>
<dbReference type="Pfam" id="PF02878">
    <property type="entry name" value="PGM_PMM_I"/>
    <property type="match status" value="1"/>
</dbReference>
<dbReference type="Pfam" id="PF02879">
    <property type="entry name" value="PGM_PMM_II"/>
    <property type="match status" value="1"/>
</dbReference>
<dbReference type="Pfam" id="PF02880">
    <property type="entry name" value="PGM_PMM_III"/>
    <property type="match status" value="1"/>
</dbReference>
<dbReference type="Pfam" id="PF00408">
    <property type="entry name" value="PGM_PMM_IV"/>
    <property type="match status" value="1"/>
</dbReference>
<dbReference type="PRINTS" id="PR00509">
    <property type="entry name" value="PGMPMM"/>
</dbReference>
<dbReference type="SUPFAM" id="SSF55957">
    <property type="entry name" value="Phosphoglucomutase, C-terminal domain"/>
    <property type="match status" value="1"/>
</dbReference>
<dbReference type="SUPFAM" id="SSF53738">
    <property type="entry name" value="Phosphoglucomutase, first 3 domains"/>
    <property type="match status" value="3"/>
</dbReference>